<proteinExistence type="inferred from homology"/>
<name>LGT_CLOB1</name>
<comment type="function">
    <text evidence="1">Catalyzes the transfer of the diacylglyceryl group from phosphatidylglycerol to the sulfhydryl group of the N-terminal cysteine of a prolipoprotein, the first step in the formation of mature lipoproteins.</text>
</comment>
<comment type="catalytic activity">
    <reaction evidence="1">
        <text>L-cysteinyl-[prolipoprotein] + a 1,2-diacyl-sn-glycero-3-phospho-(1'-sn-glycerol) = an S-1,2-diacyl-sn-glyceryl-L-cysteinyl-[prolipoprotein] + sn-glycerol 1-phosphate + H(+)</text>
        <dbReference type="Rhea" id="RHEA:56712"/>
        <dbReference type="Rhea" id="RHEA-COMP:14679"/>
        <dbReference type="Rhea" id="RHEA-COMP:14680"/>
        <dbReference type="ChEBI" id="CHEBI:15378"/>
        <dbReference type="ChEBI" id="CHEBI:29950"/>
        <dbReference type="ChEBI" id="CHEBI:57685"/>
        <dbReference type="ChEBI" id="CHEBI:64716"/>
        <dbReference type="ChEBI" id="CHEBI:140658"/>
        <dbReference type="EC" id="2.5.1.145"/>
    </reaction>
</comment>
<comment type="pathway">
    <text evidence="1">Protein modification; lipoprotein biosynthesis (diacylglyceryl transfer).</text>
</comment>
<comment type="subcellular location">
    <subcellularLocation>
        <location evidence="1">Cell membrane</location>
        <topology evidence="1">Multi-pass membrane protein</topology>
    </subcellularLocation>
</comment>
<comment type="similarity">
    <text evidence="1">Belongs to the Lgt family.</text>
</comment>
<sequence length="254" mass="29235">MNPIAFHVGNLAIRWYGVIISMGTALGLLLAMYNCKIREASYDEFINMFLIAFPSAIIGARLYYVIFEFEDYRDNLINIFNTRQGGLAIHGGIIFGVLAVYIYLKYRKESFFEYVDVAAPSIILGQAIGRWGNFFNSEAHGGPVTKEFISKFPQFIQNGMFIEGTYYHPTFLYESIWNFIICIFLVYLLKKTKKKGIVFMAYIGLYSLGRFFIEGLRTDSLYLGSIRVAQLISVLGIILSIFFIYNIIKKEKRY</sequence>
<gene>
    <name evidence="1" type="primary">lgt</name>
    <name type="ordered locus">CLB_3245</name>
</gene>
<accession>A7FYF9</accession>
<protein>
    <recommendedName>
        <fullName evidence="1">Phosphatidylglycerol--prolipoprotein diacylglyceryl transferase</fullName>
        <ecNumber evidence="1">2.5.1.145</ecNumber>
    </recommendedName>
</protein>
<keyword id="KW-1003">Cell membrane</keyword>
<keyword id="KW-0472">Membrane</keyword>
<keyword id="KW-0808">Transferase</keyword>
<keyword id="KW-0812">Transmembrane</keyword>
<keyword id="KW-1133">Transmembrane helix</keyword>
<feature type="chain" id="PRO_1000053415" description="Phosphatidylglycerol--prolipoprotein diacylglyceryl transferase">
    <location>
        <begin position="1"/>
        <end position="254"/>
    </location>
</feature>
<feature type="transmembrane region" description="Helical" evidence="1">
    <location>
        <begin position="11"/>
        <end position="31"/>
    </location>
</feature>
<feature type="transmembrane region" description="Helical" evidence="1">
    <location>
        <begin position="49"/>
        <end position="69"/>
    </location>
</feature>
<feature type="transmembrane region" description="Helical" evidence="1">
    <location>
        <begin position="84"/>
        <end position="104"/>
    </location>
</feature>
<feature type="transmembrane region" description="Helical" evidence="1">
    <location>
        <begin position="109"/>
        <end position="129"/>
    </location>
</feature>
<feature type="transmembrane region" description="Helical" evidence="1">
    <location>
        <begin position="169"/>
        <end position="189"/>
    </location>
</feature>
<feature type="transmembrane region" description="Helical" evidence="1">
    <location>
        <begin position="196"/>
        <end position="216"/>
    </location>
</feature>
<feature type="transmembrane region" description="Helical" evidence="1">
    <location>
        <begin position="228"/>
        <end position="248"/>
    </location>
</feature>
<feature type="binding site" evidence="1">
    <location>
        <position position="130"/>
    </location>
    <ligand>
        <name>a 1,2-diacyl-sn-glycero-3-phospho-(1'-sn-glycerol)</name>
        <dbReference type="ChEBI" id="CHEBI:64716"/>
    </ligand>
</feature>
<evidence type="ECO:0000255" key="1">
    <source>
        <dbReference type="HAMAP-Rule" id="MF_01147"/>
    </source>
</evidence>
<reference key="1">
    <citation type="journal article" date="2007" name="PLoS ONE">
        <title>Analysis of the neurotoxin complex genes in Clostridium botulinum A1-A4 and B1 strains: BoNT/A3, /Ba4 and /B1 clusters are located within plasmids.</title>
        <authorList>
            <person name="Smith T.J."/>
            <person name="Hill K.K."/>
            <person name="Foley B.T."/>
            <person name="Detter J.C."/>
            <person name="Munk A.C."/>
            <person name="Bruce D.C."/>
            <person name="Doggett N.A."/>
            <person name="Smith L.A."/>
            <person name="Marks J.D."/>
            <person name="Xie G."/>
            <person name="Brettin T.S."/>
        </authorList>
    </citation>
    <scope>NUCLEOTIDE SEQUENCE [LARGE SCALE GENOMIC DNA]</scope>
    <source>
        <strain>ATCC 19397 / Type A</strain>
    </source>
</reference>
<organism>
    <name type="scientific">Clostridium botulinum (strain ATCC 19397 / Type A)</name>
    <dbReference type="NCBI Taxonomy" id="441770"/>
    <lineage>
        <taxon>Bacteria</taxon>
        <taxon>Bacillati</taxon>
        <taxon>Bacillota</taxon>
        <taxon>Clostridia</taxon>
        <taxon>Eubacteriales</taxon>
        <taxon>Clostridiaceae</taxon>
        <taxon>Clostridium</taxon>
    </lineage>
</organism>
<dbReference type="EC" id="2.5.1.145" evidence="1"/>
<dbReference type="EMBL" id="CP000726">
    <property type="protein sequence ID" value="ABS35392.1"/>
    <property type="molecule type" value="Genomic_DNA"/>
</dbReference>
<dbReference type="RefSeq" id="WP_012048192.1">
    <property type="nucleotide sequence ID" value="NC_009697.1"/>
</dbReference>
<dbReference type="SMR" id="A7FYF9"/>
<dbReference type="GeneID" id="5187464"/>
<dbReference type="KEGG" id="cba:CLB_3245"/>
<dbReference type="HOGENOM" id="CLU_013386_0_1_9"/>
<dbReference type="UniPathway" id="UPA00664"/>
<dbReference type="GO" id="GO:0005886">
    <property type="term" value="C:plasma membrane"/>
    <property type="evidence" value="ECO:0007669"/>
    <property type="project" value="UniProtKB-SubCell"/>
</dbReference>
<dbReference type="GO" id="GO:0008961">
    <property type="term" value="F:phosphatidylglycerol-prolipoprotein diacylglyceryl transferase activity"/>
    <property type="evidence" value="ECO:0007669"/>
    <property type="project" value="UniProtKB-UniRule"/>
</dbReference>
<dbReference type="GO" id="GO:0042158">
    <property type="term" value="P:lipoprotein biosynthetic process"/>
    <property type="evidence" value="ECO:0007669"/>
    <property type="project" value="UniProtKB-UniRule"/>
</dbReference>
<dbReference type="HAMAP" id="MF_01147">
    <property type="entry name" value="Lgt"/>
    <property type="match status" value="1"/>
</dbReference>
<dbReference type="InterPro" id="IPR001640">
    <property type="entry name" value="Lgt"/>
</dbReference>
<dbReference type="NCBIfam" id="TIGR00544">
    <property type="entry name" value="lgt"/>
    <property type="match status" value="1"/>
</dbReference>
<dbReference type="PANTHER" id="PTHR30589:SF0">
    <property type="entry name" value="PHOSPHATIDYLGLYCEROL--PROLIPOPROTEIN DIACYLGLYCERYL TRANSFERASE"/>
    <property type="match status" value="1"/>
</dbReference>
<dbReference type="PANTHER" id="PTHR30589">
    <property type="entry name" value="PROLIPOPROTEIN DIACYLGLYCERYL TRANSFERASE"/>
    <property type="match status" value="1"/>
</dbReference>
<dbReference type="Pfam" id="PF01790">
    <property type="entry name" value="LGT"/>
    <property type="match status" value="1"/>
</dbReference>
<dbReference type="PROSITE" id="PS01311">
    <property type="entry name" value="LGT"/>
    <property type="match status" value="1"/>
</dbReference>